<evidence type="ECO:0000255" key="1">
    <source>
        <dbReference type="PROSITE-ProRule" id="PRU00297"/>
    </source>
</evidence>
<evidence type="ECO:0000256" key="2">
    <source>
        <dbReference type="SAM" id="MobiDB-lite"/>
    </source>
</evidence>
<evidence type="ECO:0000269" key="3">
    <source>
    </source>
</evidence>
<evidence type="ECO:0000269" key="4">
    <source>
    </source>
</evidence>
<evidence type="ECO:0000305" key="5"/>
<evidence type="ECO:0007744" key="6">
    <source>
        <dbReference type="PDB" id="1APX"/>
    </source>
</evidence>
<evidence type="ECO:0007829" key="7">
    <source>
        <dbReference type="PDB" id="1APX"/>
    </source>
</evidence>
<accession>P48534</accession>
<dbReference type="EC" id="1.11.1.11"/>
<dbReference type="EMBL" id="M93051">
    <property type="protein sequence ID" value="AAA33645.1"/>
    <property type="molecule type" value="Genomic_DNA"/>
</dbReference>
<dbReference type="EMBL" id="X62077">
    <property type="protein sequence ID" value="CAA43992.1"/>
    <property type="molecule type" value="mRNA"/>
</dbReference>
<dbReference type="PIR" id="A45116">
    <property type="entry name" value="A45116"/>
</dbReference>
<dbReference type="PDB" id="1APX">
    <property type="method" value="X-ray"/>
    <property type="resolution" value="2.20 A"/>
    <property type="chains" value="A/B/C/D=2-250"/>
</dbReference>
<dbReference type="PDBsum" id="1APX"/>
<dbReference type="SMR" id="P48534"/>
<dbReference type="PeroxiBase" id="2462">
    <property type="entry name" value="PsAPx01"/>
</dbReference>
<dbReference type="EnsemblPlants" id="Psat7g223000.1">
    <property type="protein sequence ID" value="Psat7g223000.1.cds"/>
    <property type="gene ID" value="Psat7g223000"/>
</dbReference>
<dbReference type="Gramene" id="Psat7g223000.1">
    <property type="protein sequence ID" value="Psat7g223000.1.cds"/>
    <property type="gene ID" value="Psat7g223000"/>
</dbReference>
<dbReference type="OrthoDB" id="2859658at2759"/>
<dbReference type="SABIO-RK" id="P48534"/>
<dbReference type="EvolutionaryTrace" id="P48534"/>
<dbReference type="GO" id="GO:0009507">
    <property type="term" value="C:chloroplast"/>
    <property type="evidence" value="ECO:0007669"/>
    <property type="project" value="TreeGrafter"/>
</dbReference>
<dbReference type="GO" id="GO:0020037">
    <property type="term" value="F:heme binding"/>
    <property type="evidence" value="ECO:0007669"/>
    <property type="project" value="InterPro"/>
</dbReference>
<dbReference type="GO" id="GO:0016688">
    <property type="term" value="F:L-ascorbate peroxidase activity"/>
    <property type="evidence" value="ECO:0007669"/>
    <property type="project" value="UniProtKB-EC"/>
</dbReference>
<dbReference type="GO" id="GO:0046872">
    <property type="term" value="F:metal ion binding"/>
    <property type="evidence" value="ECO:0007669"/>
    <property type="project" value="UniProtKB-KW"/>
</dbReference>
<dbReference type="GO" id="GO:0034599">
    <property type="term" value="P:cellular response to oxidative stress"/>
    <property type="evidence" value="ECO:0007669"/>
    <property type="project" value="InterPro"/>
</dbReference>
<dbReference type="GO" id="GO:0042744">
    <property type="term" value="P:hydrogen peroxide catabolic process"/>
    <property type="evidence" value="ECO:0007669"/>
    <property type="project" value="UniProtKB-KW"/>
</dbReference>
<dbReference type="GO" id="GO:0000302">
    <property type="term" value="P:response to reactive oxygen species"/>
    <property type="evidence" value="ECO:0007669"/>
    <property type="project" value="TreeGrafter"/>
</dbReference>
<dbReference type="CDD" id="cd00691">
    <property type="entry name" value="ascorbate_peroxidase"/>
    <property type="match status" value="1"/>
</dbReference>
<dbReference type="FunFam" id="1.10.520.10:FF:000003">
    <property type="entry name" value="Cytosolic ascorbate peroxidase"/>
    <property type="match status" value="1"/>
</dbReference>
<dbReference type="FunFam" id="1.10.420.10:FF:000003">
    <property type="entry name" value="L-ascorbate peroxidase, cytosolic"/>
    <property type="match status" value="1"/>
</dbReference>
<dbReference type="Gene3D" id="1.10.520.10">
    <property type="match status" value="1"/>
</dbReference>
<dbReference type="Gene3D" id="1.10.420.10">
    <property type="entry name" value="Peroxidase, domain 2"/>
    <property type="match status" value="1"/>
</dbReference>
<dbReference type="InterPro" id="IPR044831">
    <property type="entry name" value="Ccp1-like"/>
</dbReference>
<dbReference type="InterPro" id="IPR002016">
    <property type="entry name" value="Haem_peroxidase"/>
</dbReference>
<dbReference type="InterPro" id="IPR010255">
    <property type="entry name" value="Haem_peroxidase_sf"/>
</dbReference>
<dbReference type="InterPro" id="IPR002207">
    <property type="entry name" value="Peroxidase_I"/>
</dbReference>
<dbReference type="InterPro" id="IPR019794">
    <property type="entry name" value="Peroxidases_AS"/>
</dbReference>
<dbReference type="InterPro" id="IPR019793">
    <property type="entry name" value="Peroxidases_heam-ligand_BS"/>
</dbReference>
<dbReference type="PANTHER" id="PTHR31356:SF35">
    <property type="entry name" value="L-ASCORBATE PEROXIDASE 2, CYTOSOLIC"/>
    <property type="match status" value="1"/>
</dbReference>
<dbReference type="PANTHER" id="PTHR31356">
    <property type="entry name" value="THYLAKOID LUMENAL 29 KDA PROTEIN, CHLOROPLASTIC-RELATED"/>
    <property type="match status" value="1"/>
</dbReference>
<dbReference type="Pfam" id="PF00141">
    <property type="entry name" value="peroxidase"/>
    <property type="match status" value="1"/>
</dbReference>
<dbReference type="PRINTS" id="PR00459">
    <property type="entry name" value="ASPEROXIDASE"/>
</dbReference>
<dbReference type="PRINTS" id="PR00458">
    <property type="entry name" value="PEROXIDASE"/>
</dbReference>
<dbReference type="SUPFAM" id="SSF48113">
    <property type="entry name" value="Heme-dependent peroxidases"/>
    <property type="match status" value="1"/>
</dbReference>
<dbReference type="PROSITE" id="PS00435">
    <property type="entry name" value="PEROXIDASE_1"/>
    <property type="match status" value="1"/>
</dbReference>
<dbReference type="PROSITE" id="PS00436">
    <property type="entry name" value="PEROXIDASE_2"/>
    <property type="match status" value="1"/>
</dbReference>
<dbReference type="PROSITE" id="PS50873">
    <property type="entry name" value="PEROXIDASE_4"/>
    <property type="match status" value="1"/>
</dbReference>
<gene>
    <name type="primary">APX1</name>
    <name type="synonym">APPX1</name>
</gene>
<name>APX1_PEA</name>
<keyword id="KW-0002">3D-structure</keyword>
<keyword id="KW-0106">Calcium</keyword>
<keyword id="KW-0963">Cytoplasm</keyword>
<keyword id="KW-0349">Heme</keyword>
<keyword id="KW-0376">Hydrogen peroxide</keyword>
<keyword id="KW-0408">Iron</keyword>
<keyword id="KW-0479">Metal-binding</keyword>
<keyword id="KW-0560">Oxidoreductase</keyword>
<keyword id="KW-0575">Peroxidase</keyword>
<keyword id="KW-0630">Potassium</keyword>
<keyword id="KW-0346">Stress response</keyword>
<feature type="initiator methionine" description="Removed">
    <location>
        <position position="1"/>
    </location>
</feature>
<feature type="chain" id="PRO_0000055597" description="L-ascorbate peroxidase, cytosolic">
    <location>
        <begin position="2"/>
        <end position="250"/>
    </location>
</feature>
<feature type="region of interest" description="Disordered" evidence="2">
    <location>
        <begin position="113"/>
        <end position="137"/>
    </location>
</feature>
<feature type="compositionally biased region" description="Basic and acidic residues" evidence="2">
    <location>
        <begin position="117"/>
        <end position="137"/>
    </location>
</feature>
<feature type="active site" description="Proton acceptor">
    <location>
        <position position="42"/>
    </location>
</feature>
<feature type="binding site" description="axial binding residue" evidence="1 4">
    <location>
        <position position="163"/>
    </location>
    <ligand>
        <name>heme b</name>
        <dbReference type="ChEBI" id="CHEBI:60344"/>
    </ligand>
    <ligandPart>
        <name>Fe</name>
        <dbReference type="ChEBI" id="CHEBI:18248"/>
    </ligandPart>
</feature>
<feature type="binding site" evidence="4 6">
    <location>
        <position position="164"/>
    </location>
    <ligand>
        <name>K(+)</name>
        <dbReference type="ChEBI" id="CHEBI:29103"/>
    </ligand>
</feature>
<feature type="binding site" evidence="4 6">
    <location>
        <position position="180"/>
    </location>
    <ligand>
        <name>K(+)</name>
        <dbReference type="ChEBI" id="CHEBI:29103"/>
    </ligand>
</feature>
<feature type="binding site" evidence="4 6">
    <location>
        <position position="182"/>
    </location>
    <ligand>
        <name>K(+)</name>
        <dbReference type="ChEBI" id="CHEBI:29103"/>
    </ligand>
</feature>
<feature type="binding site" evidence="4 6">
    <location>
        <position position="185"/>
    </location>
    <ligand>
        <name>K(+)</name>
        <dbReference type="ChEBI" id="CHEBI:29103"/>
    </ligand>
</feature>
<feature type="binding site" evidence="4 6">
    <location>
        <position position="187"/>
    </location>
    <ligand>
        <name>K(+)</name>
        <dbReference type="ChEBI" id="CHEBI:29103"/>
    </ligand>
</feature>
<feature type="site" description="Transition state stabilizer">
    <location>
        <position position="38"/>
    </location>
</feature>
<feature type="helix" evidence="7">
    <location>
        <begin position="10"/>
        <end position="30"/>
    </location>
</feature>
<feature type="helix" evidence="7">
    <location>
        <begin position="33"/>
        <end position="44"/>
    </location>
</feature>
<feature type="turn" evidence="7">
    <location>
        <begin position="49"/>
        <end position="52"/>
    </location>
</feature>
<feature type="strand" evidence="7">
    <location>
        <begin position="55"/>
        <end position="58"/>
    </location>
</feature>
<feature type="helix" evidence="7">
    <location>
        <begin position="59"/>
        <end position="61"/>
    </location>
</feature>
<feature type="helix" evidence="7">
    <location>
        <begin position="63"/>
        <end position="66"/>
    </location>
</feature>
<feature type="helix" evidence="7">
    <location>
        <begin position="69"/>
        <end position="71"/>
    </location>
</feature>
<feature type="helix" evidence="7">
    <location>
        <begin position="74"/>
        <end position="86"/>
    </location>
</feature>
<feature type="helix" evidence="7">
    <location>
        <begin position="93"/>
        <end position="107"/>
    </location>
</feature>
<feature type="helix" evidence="7">
    <location>
        <begin position="138"/>
        <end position="145"/>
    </location>
</feature>
<feature type="turn" evidence="7">
    <location>
        <begin position="146"/>
        <end position="148"/>
    </location>
</feature>
<feature type="helix" evidence="7">
    <location>
        <begin position="153"/>
        <end position="160"/>
    </location>
</feature>
<feature type="helix" evidence="7">
    <location>
        <begin position="161"/>
        <end position="164"/>
    </location>
</feature>
<feature type="turn" evidence="7">
    <location>
        <begin position="170"/>
        <end position="172"/>
    </location>
</feature>
<feature type="strand" evidence="7">
    <location>
        <begin position="177"/>
        <end position="181"/>
    </location>
</feature>
<feature type="helix" evidence="7">
    <location>
        <begin position="189"/>
        <end position="195"/>
    </location>
</feature>
<feature type="helix" evidence="7">
    <location>
        <begin position="206"/>
        <end position="209"/>
    </location>
</feature>
<feature type="turn" evidence="7">
    <location>
        <begin position="210"/>
        <end position="212"/>
    </location>
</feature>
<feature type="helix" evidence="7">
    <location>
        <begin position="217"/>
        <end position="226"/>
    </location>
</feature>
<feature type="helix" evidence="7">
    <location>
        <begin position="228"/>
        <end position="243"/>
    </location>
</feature>
<feature type="turn" evidence="7">
    <location>
        <begin position="244"/>
        <end position="246"/>
    </location>
</feature>
<organism>
    <name type="scientific">Pisum sativum</name>
    <name type="common">Garden pea</name>
    <name type="synonym">Lathyrus oleraceus</name>
    <dbReference type="NCBI Taxonomy" id="3888"/>
    <lineage>
        <taxon>Eukaryota</taxon>
        <taxon>Viridiplantae</taxon>
        <taxon>Streptophyta</taxon>
        <taxon>Embryophyta</taxon>
        <taxon>Tracheophyta</taxon>
        <taxon>Spermatophyta</taxon>
        <taxon>Magnoliopsida</taxon>
        <taxon>eudicotyledons</taxon>
        <taxon>Gunneridae</taxon>
        <taxon>Pentapetalae</taxon>
        <taxon>rosids</taxon>
        <taxon>fabids</taxon>
        <taxon>Fabales</taxon>
        <taxon>Fabaceae</taxon>
        <taxon>Papilionoideae</taxon>
        <taxon>50 kb inversion clade</taxon>
        <taxon>NPAAA clade</taxon>
        <taxon>Hologalegina</taxon>
        <taxon>IRL clade</taxon>
        <taxon>Fabeae</taxon>
        <taxon>Pisum</taxon>
    </lineage>
</organism>
<sequence length="250" mass="27193">MGKSYPTVSPDYQKAIEKAKRKLRGFIAEKKCAPLILRLAWHSAGTFDSKTKTGGPFGTIKHQAELAHGANNGLDIAVRLLEPIKEQFPIVSYADFYQLAGVVAVEITGGPEVPFHPGREDKPEPPPEGRLPDATKGSDHLRDVFGKAMGLSDQDIVALSGGHTIGAAHKERSGFEGPWTSNPLIFDNSYFTELLTGEKDGLLQLPSDKALLTDSVFRPLVEKYAADEDVFFADYAEAHLKLSELGFAEA</sequence>
<proteinExistence type="evidence at protein level"/>
<comment type="function">
    <text>Plays a key role in hydrogen peroxide removal.</text>
</comment>
<comment type="catalytic activity">
    <reaction>
        <text>L-ascorbate + H2O2 = L-dehydroascorbate + 2 H2O</text>
        <dbReference type="Rhea" id="RHEA:22996"/>
        <dbReference type="ChEBI" id="CHEBI:15377"/>
        <dbReference type="ChEBI" id="CHEBI:16240"/>
        <dbReference type="ChEBI" id="CHEBI:38290"/>
        <dbReference type="ChEBI" id="CHEBI:58539"/>
        <dbReference type="EC" id="1.11.1.11"/>
    </reaction>
</comment>
<comment type="cofactor">
    <cofactor>
        <name>heme b</name>
        <dbReference type="ChEBI" id="CHEBI:60344"/>
    </cofactor>
    <text>Binds 1 heme b (iron(II)-protoporphyrin IX) group per subunit.</text>
</comment>
<comment type="subcellular location">
    <subcellularLocation>
        <location>Cytoplasm</location>
    </subcellularLocation>
</comment>
<comment type="induction">
    <text evidence="3">By stress.</text>
</comment>
<comment type="miscellaneous">
    <text>Binds one cation per subunit; probably K(+), but might also be Ca(2+).</text>
</comment>
<comment type="similarity">
    <text evidence="5">Belongs to the peroxidase family. Ascorbate peroxidase subfamily.</text>
</comment>
<protein>
    <recommendedName>
        <fullName>L-ascorbate peroxidase, cytosolic</fullName>
        <shortName>AP</shortName>
        <ecNumber>1.11.1.11</ecNumber>
    </recommendedName>
    <alternativeName>
        <fullName>PsAPx01</fullName>
    </alternativeName>
</protein>
<reference key="1">
    <citation type="journal article" date="1991" name="FEBS Lett.">
        <title>Molecular cloning and nucleotide sequence analysis of a cDNA encoding pea cytosolic ascorbate peroxidase.</title>
        <authorList>
            <person name="Mittler R."/>
            <person name="Zilinskas B.A."/>
        </authorList>
    </citation>
    <scope>NUCLEOTIDE SEQUENCE [GENOMIC DNA]</scope>
    <source>
        <strain>cv. Little Marvel</strain>
        <tissue>Leaf</tissue>
    </source>
</reference>
<reference key="2">
    <citation type="journal article" date="1992" name="J. Biol. Chem.">
        <title>Molecular cloning and characterization of a gene encoding pea cytosolic ascorbate peroxidase.</title>
        <authorList>
            <person name="Mittler R."/>
            <person name="Zilinskas B.A."/>
        </authorList>
    </citation>
    <scope>NUCLEOTIDE SEQUENCE [MRNA]</scope>
    <scope>INDUCTION</scope>
    <source>
        <strain>cv. Little Marvel</strain>
    </source>
</reference>
<reference key="3">
    <citation type="journal article" date="1993" name="J. Biol. Chem.">
        <authorList>
            <person name="Mittler R."/>
            <person name="Zilinskas B.A."/>
        </authorList>
    </citation>
    <scope>ERRATUM OF PUBMED:1400489</scope>
</reference>
<reference key="4">
    <citation type="journal article" date="1995" name="Biochemistry">
        <title>Crystal structure of recombinant pea cytosolic ascorbate peroxidase.</title>
        <authorList>
            <person name="Patterson W.R."/>
            <person name="Poulos T.L."/>
        </authorList>
    </citation>
    <scope>X-RAY CRYSTALLOGRAPHY (2.2 ANGSTROMS) IN COMPLEX WITH HEME AND POTASSIUM IONS</scope>
</reference>